<keyword id="KW-0963">Cytoplasm</keyword>
<keyword id="KW-0342">GTP-binding</keyword>
<keyword id="KW-0547">Nucleotide-binding</keyword>
<keyword id="KW-1185">Reference proteome</keyword>
<sequence>MEKMSYTFSQQYEEKIRPCIDTIDNLRSLGVEKDLALPAIAVIGDQSSGKSSVLEALSGVPLPRGSGIVTRCPLELKMIRSKEDEKWHGRISYQNHEEDFDDPAEVEKKIREAQDEMAGAGVGISEELISLQITSANVPDLTLIDLPGIARVAVKGQPENIGDQIKRLIRMFITKQETINLVVVPCNVDIATTEALQMAQAEDPEGERTLGILTKPDLVDKGTEGTVVDIVHNEVIHLTKGYMIVRCRGQKEIMDQVTLNEATETESAFFKDHPHFRKLYEEGFATIPKLAEKLTIELVHHIQRSLPRLEDQIQTKLAETQKELEAYGDGPPSDPAERLSFFIDKVTAFTCDTLNLTTGEEVKSASKLLIFPELRQEFAYWNSFLDSSGYSFKLKIEEEVDNYEVKYRGRELPGFINYKTFEGLVREQMKLLEEPALKMLKNVSDMVKKKFIQLAQSSFTGFPILLKIAKTKIEAIKQDKECLAESMLRTQFKMELIVYTQDGTYSQSLLRSKEKREEDEEDTENFDCMTVGIATSNHATLSEMKLHLESYYMIASQRLADQIPMVIRYLLLQEAALELQRSMLQLLQDKDGVDDMLKEDFDIGQKRENLLSRQKRLMKAQNLLATY</sequence>
<accession>Q800G8</accession>
<comment type="subcellular location">
    <subcellularLocation>
        <location evidence="1">Cytoplasm</location>
    </subcellularLocation>
</comment>
<comment type="induction">
    <text>By interferons.</text>
</comment>
<comment type="similarity">
    <text evidence="4">Belongs to the TRAFAC class dynamin-like GTPase superfamily. Dynamin/Fzo/YdjA family.</text>
</comment>
<evidence type="ECO:0000250" key="1"/>
<evidence type="ECO:0000255" key="2"/>
<evidence type="ECO:0000255" key="3">
    <source>
        <dbReference type="PROSITE-ProRule" id="PRU00720"/>
    </source>
</evidence>
<evidence type="ECO:0000255" key="4">
    <source>
        <dbReference type="PROSITE-ProRule" id="PRU01055"/>
    </source>
</evidence>
<gene>
    <name type="primary">mxb</name>
</gene>
<proteinExistence type="evidence at transcript level"/>
<organism>
    <name type="scientific">Danio rerio</name>
    <name type="common">Zebrafish</name>
    <name type="synonym">Brachydanio rerio</name>
    <dbReference type="NCBI Taxonomy" id="7955"/>
    <lineage>
        <taxon>Eukaryota</taxon>
        <taxon>Metazoa</taxon>
        <taxon>Chordata</taxon>
        <taxon>Craniata</taxon>
        <taxon>Vertebrata</taxon>
        <taxon>Euteleostomi</taxon>
        <taxon>Actinopterygii</taxon>
        <taxon>Neopterygii</taxon>
        <taxon>Teleostei</taxon>
        <taxon>Ostariophysi</taxon>
        <taxon>Cypriniformes</taxon>
        <taxon>Danionidae</taxon>
        <taxon>Danioninae</taxon>
        <taxon>Danio</taxon>
    </lineage>
</organism>
<name>MXB_DANRE</name>
<protein>
    <recommendedName>
        <fullName>Interferon-induced GTP-binding protein MxB</fullName>
    </recommendedName>
    <alternativeName>
        <fullName>IFN-inducible antiviral protein MxB</fullName>
    </alternativeName>
    <alternativeName>
        <fullName>Interferon-inducible MxB protein</fullName>
    </alternativeName>
</protein>
<reference key="1">
    <citation type="journal article" date="2003" name="BMC Genomics">
        <title>Comparative genomic analysis reveals independent expansion of a lineage-specific gene family in vertebrates: the class II cytokine receptors and their ligands in mammals and fish.</title>
        <authorList>
            <person name="Lutfalla G."/>
            <person name="Roest Crollius H."/>
            <person name="Stange-Thomann N."/>
            <person name="Jaillon O."/>
            <person name="Mogensen K."/>
            <person name="Monneron D."/>
        </authorList>
    </citation>
    <scope>NUCLEOTIDE SEQUENCE [MRNA]</scope>
</reference>
<dbReference type="EMBL" id="AJ544824">
    <property type="protein sequence ID" value="CAD67756.2"/>
    <property type="molecule type" value="mRNA"/>
</dbReference>
<dbReference type="SMR" id="Q800G8"/>
<dbReference type="FunCoup" id="Q800G8">
    <property type="interactions" value="35"/>
</dbReference>
<dbReference type="STRING" id="7955.ENSDARP00000100431"/>
<dbReference type="PaxDb" id="7955-ENSDARP00000100431"/>
<dbReference type="AGR" id="ZFIN:ZDB-GENE-030721-6"/>
<dbReference type="ZFIN" id="ZDB-GENE-030721-6">
    <property type="gene designation" value="mxb"/>
</dbReference>
<dbReference type="eggNOG" id="KOG0446">
    <property type="taxonomic scope" value="Eukaryota"/>
</dbReference>
<dbReference type="InParanoid" id="Q800G8"/>
<dbReference type="PhylomeDB" id="Q800G8"/>
<dbReference type="PRO" id="PR:Q800G8"/>
<dbReference type="Proteomes" id="UP000000437">
    <property type="component" value="Unplaced"/>
</dbReference>
<dbReference type="GO" id="GO:0005737">
    <property type="term" value="C:cytoplasm"/>
    <property type="evidence" value="ECO:0000318"/>
    <property type="project" value="GO_Central"/>
</dbReference>
<dbReference type="GO" id="GO:0005874">
    <property type="term" value="C:microtubule"/>
    <property type="evidence" value="ECO:0000318"/>
    <property type="project" value="GO_Central"/>
</dbReference>
<dbReference type="GO" id="GO:0005634">
    <property type="term" value="C:nucleus"/>
    <property type="evidence" value="ECO:0000318"/>
    <property type="project" value="GO_Central"/>
</dbReference>
<dbReference type="GO" id="GO:0005886">
    <property type="term" value="C:plasma membrane"/>
    <property type="evidence" value="ECO:0000318"/>
    <property type="project" value="GO_Central"/>
</dbReference>
<dbReference type="GO" id="GO:0098793">
    <property type="term" value="C:presynapse"/>
    <property type="evidence" value="ECO:0007669"/>
    <property type="project" value="GOC"/>
</dbReference>
<dbReference type="GO" id="GO:0045202">
    <property type="term" value="C:synapse"/>
    <property type="evidence" value="ECO:0000318"/>
    <property type="project" value="GO_Central"/>
</dbReference>
<dbReference type="GO" id="GO:0005525">
    <property type="term" value="F:GTP binding"/>
    <property type="evidence" value="ECO:0007669"/>
    <property type="project" value="UniProtKB-KW"/>
</dbReference>
<dbReference type="GO" id="GO:0003924">
    <property type="term" value="F:GTPase activity"/>
    <property type="evidence" value="ECO:0000318"/>
    <property type="project" value="GO_Central"/>
</dbReference>
<dbReference type="GO" id="GO:0008017">
    <property type="term" value="F:microtubule binding"/>
    <property type="evidence" value="ECO:0000318"/>
    <property type="project" value="GO_Central"/>
</dbReference>
<dbReference type="GO" id="GO:0051607">
    <property type="term" value="P:defense response to virus"/>
    <property type="evidence" value="ECO:0000318"/>
    <property type="project" value="GO_Central"/>
</dbReference>
<dbReference type="GO" id="GO:0031623">
    <property type="term" value="P:receptor internalization"/>
    <property type="evidence" value="ECO:0000318"/>
    <property type="project" value="GO_Central"/>
</dbReference>
<dbReference type="GO" id="GO:0009615">
    <property type="term" value="P:response to virus"/>
    <property type="evidence" value="ECO:0000314"/>
    <property type="project" value="ZFIN"/>
</dbReference>
<dbReference type="GO" id="GO:0016185">
    <property type="term" value="P:synaptic vesicle budding from presynaptic endocytic zone membrane"/>
    <property type="evidence" value="ECO:0000318"/>
    <property type="project" value="GO_Central"/>
</dbReference>
<dbReference type="CDD" id="cd08771">
    <property type="entry name" value="DLP_1"/>
    <property type="match status" value="1"/>
</dbReference>
<dbReference type="FunFam" id="1.20.120.1240:FF:000007">
    <property type="entry name" value="Interferon-induced GTP-binding protein Mx1"/>
    <property type="match status" value="1"/>
</dbReference>
<dbReference type="FunFam" id="3.40.50.300:FF:000621">
    <property type="entry name" value="Interferon-induced GTP-binding protein Mx1"/>
    <property type="match status" value="1"/>
</dbReference>
<dbReference type="Gene3D" id="1.20.120.1240">
    <property type="entry name" value="Dynamin, middle domain"/>
    <property type="match status" value="1"/>
</dbReference>
<dbReference type="Gene3D" id="3.40.50.300">
    <property type="entry name" value="P-loop containing nucleotide triphosphate hydrolases"/>
    <property type="match status" value="1"/>
</dbReference>
<dbReference type="InterPro" id="IPR022812">
    <property type="entry name" value="Dynamin"/>
</dbReference>
<dbReference type="InterPro" id="IPR001401">
    <property type="entry name" value="Dynamin_GTPase"/>
</dbReference>
<dbReference type="InterPro" id="IPR019762">
    <property type="entry name" value="Dynamin_GTPase_CS"/>
</dbReference>
<dbReference type="InterPro" id="IPR045063">
    <property type="entry name" value="Dynamin_N"/>
</dbReference>
<dbReference type="InterPro" id="IPR000375">
    <property type="entry name" value="Dynamin_stalk"/>
</dbReference>
<dbReference type="InterPro" id="IPR030381">
    <property type="entry name" value="G_DYNAMIN_dom"/>
</dbReference>
<dbReference type="InterPro" id="IPR003130">
    <property type="entry name" value="GED"/>
</dbReference>
<dbReference type="InterPro" id="IPR020850">
    <property type="entry name" value="GED_dom"/>
</dbReference>
<dbReference type="InterPro" id="IPR027417">
    <property type="entry name" value="P-loop_NTPase"/>
</dbReference>
<dbReference type="PANTHER" id="PTHR11566">
    <property type="entry name" value="DYNAMIN"/>
    <property type="match status" value="1"/>
</dbReference>
<dbReference type="PANTHER" id="PTHR11566:SF225">
    <property type="entry name" value="INTERFERON-INDUCED GTP-BINDING PROTEIN MX-RELATED"/>
    <property type="match status" value="1"/>
</dbReference>
<dbReference type="Pfam" id="PF01031">
    <property type="entry name" value="Dynamin_M"/>
    <property type="match status" value="1"/>
</dbReference>
<dbReference type="Pfam" id="PF00350">
    <property type="entry name" value="Dynamin_N"/>
    <property type="match status" value="1"/>
</dbReference>
<dbReference type="Pfam" id="PF02212">
    <property type="entry name" value="GED"/>
    <property type="match status" value="1"/>
</dbReference>
<dbReference type="PRINTS" id="PR00195">
    <property type="entry name" value="DYNAMIN"/>
</dbReference>
<dbReference type="SMART" id="SM00053">
    <property type="entry name" value="DYNc"/>
    <property type="match status" value="1"/>
</dbReference>
<dbReference type="SMART" id="SM00302">
    <property type="entry name" value="GED"/>
    <property type="match status" value="1"/>
</dbReference>
<dbReference type="SUPFAM" id="SSF52540">
    <property type="entry name" value="P-loop containing nucleoside triphosphate hydrolases"/>
    <property type="match status" value="1"/>
</dbReference>
<dbReference type="PROSITE" id="PS00410">
    <property type="entry name" value="G_DYNAMIN_1"/>
    <property type="match status" value="1"/>
</dbReference>
<dbReference type="PROSITE" id="PS51718">
    <property type="entry name" value="G_DYNAMIN_2"/>
    <property type="match status" value="1"/>
</dbReference>
<dbReference type="PROSITE" id="PS51388">
    <property type="entry name" value="GED"/>
    <property type="match status" value="1"/>
</dbReference>
<feature type="chain" id="PRO_0000292868" description="Interferon-induced GTP-binding protein MxB">
    <location>
        <begin position="1"/>
        <end position="627"/>
    </location>
</feature>
<feature type="domain" description="Dynamin-type G" evidence="4">
    <location>
        <begin position="34"/>
        <end position="307"/>
    </location>
</feature>
<feature type="domain" description="GED" evidence="3">
    <location>
        <begin position="541"/>
        <end position="627"/>
    </location>
</feature>
<feature type="region of interest" description="G1 motif" evidence="4">
    <location>
        <begin position="44"/>
        <end position="51"/>
    </location>
</feature>
<feature type="region of interest" description="G2 motif" evidence="4">
    <location>
        <begin position="69"/>
        <end position="71"/>
    </location>
</feature>
<feature type="region of interest" description="G3 motif" evidence="4">
    <location>
        <begin position="145"/>
        <end position="148"/>
    </location>
</feature>
<feature type="region of interest" description="G4 motif" evidence="4">
    <location>
        <begin position="214"/>
        <end position="217"/>
    </location>
</feature>
<feature type="region of interest" description="G5 motif" evidence="4">
    <location>
        <begin position="246"/>
        <end position="249"/>
    </location>
</feature>
<feature type="binding site" evidence="2">
    <location>
        <begin position="44"/>
        <end position="51"/>
    </location>
    <ligand>
        <name>GTP</name>
        <dbReference type="ChEBI" id="CHEBI:37565"/>
    </ligand>
</feature>
<feature type="binding site" evidence="2">
    <location>
        <begin position="145"/>
        <end position="149"/>
    </location>
    <ligand>
        <name>GTP</name>
        <dbReference type="ChEBI" id="CHEBI:37565"/>
    </ligand>
</feature>
<feature type="binding site" evidence="2">
    <location>
        <begin position="214"/>
        <end position="217"/>
    </location>
    <ligand>
        <name>GTP</name>
        <dbReference type="ChEBI" id="CHEBI:37565"/>
    </ligand>
</feature>